<evidence type="ECO:0000250" key="1"/>
<evidence type="ECO:0000250" key="2">
    <source>
        <dbReference type="UniProtKB" id="P04757"/>
    </source>
</evidence>
<evidence type="ECO:0000250" key="3">
    <source>
        <dbReference type="UniProtKB" id="P04758"/>
    </source>
</evidence>
<evidence type="ECO:0000250" key="4">
    <source>
        <dbReference type="UniProtKB" id="P12392"/>
    </source>
</evidence>
<evidence type="ECO:0000250" key="5">
    <source>
        <dbReference type="UniProtKB" id="P17787"/>
    </source>
</evidence>
<evidence type="ECO:0000250" key="6">
    <source>
        <dbReference type="UniProtKB" id="P30926"/>
    </source>
</evidence>
<evidence type="ECO:0000255" key="7"/>
<evidence type="ECO:0000269" key="8">
    <source>
    </source>
</evidence>
<evidence type="ECO:0000269" key="9">
    <source>
    </source>
</evidence>
<evidence type="ECO:0000305" key="10"/>
<keyword id="KW-1003">Cell membrane</keyword>
<keyword id="KW-1015">Disulfide bond</keyword>
<keyword id="KW-0325">Glycoprotein</keyword>
<keyword id="KW-0407">Ion channel</keyword>
<keyword id="KW-0406">Ion transport</keyword>
<keyword id="KW-1071">Ligand-gated ion channel</keyword>
<keyword id="KW-0472">Membrane</keyword>
<keyword id="KW-0479">Metal-binding</keyword>
<keyword id="KW-0675">Receptor</keyword>
<keyword id="KW-1185">Reference proteome</keyword>
<keyword id="KW-0732">Signal</keyword>
<keyword id="KW-0915">Sodium</keyword>
<keyword id="KW-0770">Synapse</keyword>
<keyword id="KW-0812">Transmembrane</keyword>
<keyword id="KW-1133">Transmembrane helix</keyword>
<keyword id="KW-0813">Transport</keyword>
<feature type="signal peptide" evidence="7">
    <location>
        <begin position="1"/>
        <end position="20"/>
    </location>
</feature>
<feature type="chain" id="PRO_0000000390" description="Neuronal acetylcholine receptor subunit beta-4">
    <location>
        <begin position="21"/>
        <end position="495"/>
    </location>
</feature>
<feature type="topological domain" description="Extracellular" evidence="7">
    <location>
        <begin position="21"/>
        <end position="235"/>
    </location>
</feature>
<feature type="transmembrane region" description="Helical" evidence="7">
    <location>
        <begin position="236"/>
        <end position="256"/>
    </location>
</feature>
<feature type="topological domain" description="Cytoplasmic" evidence="7">
    <location>
        <begin position="257"/>
        <end position="264"/>
    </location>
</feature>
<feature type="transmembrane region" description="Helical" evidence="7">
    <location>
        <begin position="265"/>
        <end position="285"/>
    </location>
</feature>
<feature type="topological domain" description="Extracellular" evidence="7">
    <location>
        <begin position="286"/>
        <end position="297"/>
    </location>
</feature>
<feature type="transmembrane region" description="Helical" evidence="7">
    <location>
        <begin position="298"/>
        <end position="318"/>
    </location>
</feature>
<feature type="topological domain" description="Cytoplasmic" evidence="7">
    <location>
        <begin position="319"/>
        <end position="463"/>
    </location>
</feature>
<feature type="transmembrane region" description="Helical" evidence="7">
    <location>
        <begin position="464"/>
        <end position="484"/>
    </location>
</feature>
<feature type="topological domain" description="Extracellular" evidence="7">
    <location>
        <begin position="485"/>
        <end position="495"/>
    </location>
</feature>
<feature type="binding site" evidence="6">
    <location>
        <position position="261"/>
    </location>
    <ligand>
        <name>Na(+)</name>
        <dbReference type="ChEBI" id="CHEBI:29101"/>
    </ligand>
</feature>
<feature type="site" description="Key residue that facilitates effective access of the conotoxin BuIA to the channel binding site" evidence="4">
    <location>
        <position position="81"/>
    </location>
</feature>
<feature type="site" description="Key residue for a low dissociation (K(off)) from the conotoxin BuIA" evidence="4">
    <location>
        <position position="133"/>
    </location>
</feature>
<feature type="site" description="Key residue for a low dissociation (K(off)) from the conotoxin BuIA" evidence="4">
    <location>
        <position position="141"/>
    </location>
</feature>
<feature type="glycosylation site" description="N-linked (GlcNAc...) asparagine" evidence="7">
    <location>
        <position position="35"/>
    </location>
</feature>
<feature type="glycosylation site" description="N-linked (GlcNAc...) asparagine" evidence="7">
    <location>
        <position position="92"/>
    </location>
</feature>
<feature type="glycosylation site" description="N-linked (GlcNAc...) asparagine" evidence="7">
    <location>
        <position position="137"/>
    </location>
</feature>
<feature type="glycosylation site" description="N-linked (GlcNAc...) asparagine" evidence="7">
    <location>
        <position position="165"/>
    </location>
</feature>
<feature type="disulfide bond" evidence="1">
    <location>
        <begin position="152"/>
        <end position="166"/>
    </location>
</feature>
<feature type="mutagenesis site" description="Loss of current increase in presence of CHRNA3." evidence="9">
    <original>S</original>
    <variation>R</variation>
    <location>
        <position position="435"/>
    </location>
</feature>
<organism>
    <name type="scientific">Mus musculus</name>
    <name type="common">Mouse</name>
    <dbReference type="NCBI Taxonomy" id="10090"/>
    <lineage>
        <taxon>Eukaryota</taxon>
        <taxon>Metazoa</taxon>
        <taxon>Chordata</taxon>
        <taxon>Craniata</taxon>
        <taxon>Vertebrata</taxon>
        <taxon>Euteleostomi</taxon>
        <taxon>Mammalia</taxon>
        <taxon>Eutheria</taxon>
        <taxon>Euarchontoglires</taxon>
        <taxon>Glires</taxon>
        <taxon>Rodentia</taxon>
        <taxon>Myomorpha</taxon>
        <taxon>Muroidea</taxon>
        <taxon>Muridae</taxon>
        <taxon>Murinae</taxon>
        <taxon>Mus</taxon>
        <taxon>Mus</taxon>
    </lineage>
</organism>
<name>ACHB4_MOUSE</name>
<accession>Q8R493</accession>
<accession>Q8VI06</accession>
<dbReference type="EMBL" id="AF492840">
    <property type="protein sequence ID" value="AAM11659.1"/>
    <property type="molecule type" value="mRNA"/>
</dbReference>
<dbReference type="EMBL" id="AY574269">
    <property type="protein sequence ID" value="AAS90365.1"/>
    <property type="molecule type" value="mRNA"/>
</dbReference>
<dbReference type="EMBL" id="AF325351">
    <property type="protein sequence ID" value="AAL37367.1"/>
    <property type="molecule type" value="mRNA"/>
</dbReference>
<dbReference type="CCDS" id="CCDS23200.1"/>
<dbReference type="RefSeq" id="NP_683746.1">
    <property type="nucleotide sequence ID" value="NM_148944.4"/>
</dbReference>
<dbReference type="SMR" id="Q8R493"/>
<dbReference type="ComplexPortal" id="CPX-182">
    <property type="entry name" value="Neuronal nicotinic acetylcholine receptor complex, alpha2-beta4"/>
</dbReference>
<dbReference type="ComplexPortal" id="CPX-204">
    <property type="entry name" value="Neuronal nicotinic acetylcholine receptor complex, alpha3-beta4"/>
</dbReference>
<dbReference type="ComplexPortal" id="CPX-209">
    <property type="entry name" value="Neuronal nicotinic acetylcholine receptor complex, alpha3-alpha5-beta4"/>
</dbReference>
<dbReference type="ComplexPortal" id="CPX-212">
    <property type="entry name" value="Neuronal nicotinic acetylcholine receptor complex, alpha3-alpha6-beta4"/>
</dbReference>
<dbReference type="ComplexPortal" id="CPX-220">
    <property type="entry name" value="Neuronal nicotinic acetylcholine receptor complex, alpha4-beta4"/>
</dbReference>
<dbReference type="FunCoup" id="Q8R493">
    <property type="interactions" value="389"/>
</dbReference>
<dbReference type="IntAct" id="Q8R493">
    <property type="interactions" value="2"/>
</dbReference>
<dbReference type="STRING" id="10090.ENSMUSP00000034854"/>
<dbReference type="BindingDB" id="Q8R493"/>
<dbReference type="ChEMBL" id="CHEMBL3301382"/>
<dbReference type="ChEMBL" id="CHEMBL3885609"/>
<dbReference type="GlyConnect" id="2548">
    <property type="glycosylation" value="1 N-Linked glycan (1 site)"/>
</dbReference>
<dbReference type="GlyCosmos" id="Q8R493">
    <property type="glycosylation" value="4 sites, 1 glycan"/>
</dbReference>
<dbReference type="GlyGen" id="Q8R493">
    <property type="glycosylation" value="4 sites, 4 N-linked glycans (4 sites)"/>
</dbReference>
<dbReference type="iPTMnet" id="Q8R493"/>
<dbReference type="PhosphoSitePlus" id="Q8R493"/>
<dbReference type="PaxDb" id="10090-ENSMUSP00000034854"/>
<dbReference type="Antibodypedia" id="15128">
    <property type="antibodies" value="173 antibodies from 28 providers"/>
</dbReference>
<dbReference type="DNASU" id="108015"/>
<dbReference type="Ensembl" id="ENSMUST00000034854.8">
    <property type="protein sequence ID" value="ENSMUSP00000034854.7"/>
    <property type="gene ID" value="ENSMUSG00000035200.8"/>
</dbReference>
<dbReference type="GeneID" id="108015"/>
<dbReference type="KEGG" id="mmu:108015"/>
<dbReference type="UCSC" id="uc009prz.1">
    <property type="organism name" value="mouse"/>
</dbReference>
<dbReference type="AGR" id="MGI:87892"/>
<dbReference type="CTD" id="1143"/>
<dbReference type="MGI" id="MGI:87892">
    <property type="gene designation" value="Chrnb4"/>
</dbReference>
<dbReference type="VEuPathDB" id="HostDB:ENSMUSG00000035200"/>
<dbReference type="eggNOG" id="KOG3645">
    <property type="taxonomic scope" value="Eukaryota"/>
</dbReference>
<dbReference type="GeneTree" id="ENSGT00940000158708"/>
<dbReference type="HOGENOM" id="CLU_018074_1_0_1"/>
<dbReference type="InParanoid" id="Q8R493"/>
<dbReference type="OMA" id="TCKIEVK"/>
<dbReference type="OrthoDB" id="5975154at2759"/>
<dbReference type="PhylomeDB" id="Q8R493"/>
<dbReference type="TreeFam" id="TF315605"/>
<dbReference type="Reactome" id="R-MMU-629587">
    <property type="pathway name" value="Highly sodium permeable postsynaptic acetylcholine nicotinic receptors"/>
</dbReference>
<dbReference type="Reactome" id="R-MMU-629594">
    <property type="pathway name" value="Highly calcium permeable postsynaptic nicotinic acetylcholine receptors"/>
</dbReference>
<dbReference type="Reactome" id="R-MMU-629597">
    <property type="pathway name" value="Highly calcium permeable nicotinic acetylcholine receptors"/>
</dbReference>
<dbReference type="Reactome" id="R-MMU-6798695">
    <property type="pathway name" value="Neutrophil degranulation"/>
</dbReference>
<dbReference type="BioGRID-ORCS" id="108015">
    <property type="hits" value="3 hits in 80 CRISPR screens"/>
</dbReference>
<dbReference type="PRO" id="PR:Q8R493"/>
<dbReference type="Proteomes" id="UP000000589">
    <property type="component" value="Chromosome 9"/>
</dbReference>
<dbReference type="RNAct" id="Q8R493">
    <property type="molecule type" value="protein"/>
</dbReference>
<dbReference type="Bgee" id="ENSMUSG00000035200">
    <property type="expression patterns" value="Expressed in habenula and 59 other cell types or tissues"/>
</dbReference>
<dbReference type="ExpressionAtlas" id="Q8R493">
    <property type="expression patterns" value="baseline and differential"/>
</dbReference>
<dbReference type="GO" id="GO:0005892">
    <property type="term" value="C:acetylcholine-gated channel complex"/>
    <property type="evidence" value="ECO:0007669"/>
    <property type="project" value="Ensembl"/>
</dbReference>
<dbReference type="GO" id="GO:0034703">
    <property type="term" value="C:cation channel complex"/>
    <property type="evidence" value="ECO:0007669"/>
    <property type="project" value="Ensembl"/>
</dbReference>
<dbReference type="GO" id="GO:0098981">
    <property type="term" value="C:cholinergic synapse"/>
    <property type="evidence" value="ECO:0000314"/>
    <property type="project" value="SynGO"/>
</dbReference>
<dbReference type="GO" id="GO:0098878">
    <property type="term" value="C:neurotransmitter receptor complex"/>
    <property type="evidence" value="ECO:0007669"/>
    <property type="project" value="Ensembl"/>
</dbReference>
<dbReference type="GO" id="GO:0005886">
    <property type="term" value="C:plasma membrane"/>
    <property type="evidence" value="ECO:0000266"/>
    <property type="project" value="MGI"/>
</dbReference>
<dbReference type="GO" id="GO:0099634">
    <property type="term" value="C:postsynaptic specialization membrane"/>
    <property type="evidence" value="ECO:0000314"/>
    <property type="project" value="SynGO"/>
</dbReference>
<dbReference type="GO" id="GO:0015464">
    <property type="term" value="F:acetylcholine receptor activity"/>
    <property type="evidence" value="ECO:0007669"/>
    <property type="project" value="Ensembl"/>
</dbReference>
<dbReference type="GO" id="GO:0022848">
    <property type="term" value="F:acetylcholine-gated monoatomic cation-selective channel activity"/>
    <property type="evidence" value="ECO:0007669"/>
    <property type="project" value="Ensembl"/>
</dbReference>
<dbReference type="GO" id="GO:1904315">
    <property type="term" value="F:transmitter-gated monoatomic ion channel activity involved in regulation of postsynaptic membrane potential"/>
    <property type="evidence" value="ECO:0000314"/>
    <property type="project" value="SynGO"/>
</dbReference>
<dbReference type="GO" id="GO:0035095">
    <property type="term" value="P:behavioral response to nicotine"/>
    <property type="evidence" value="ECO:0000315"/>
    <property type="project" value="MGI"/>
</dbReference>
<dbReference type="GO" id="GO:0007626">
    <property type="term" value="P:locomotory behavior"/>
    <property type="evidence" value="ECO:0000315"/>
    <property type="project" value="MGI"/>
</dbReference>
<dbReference type="GO" id="GO:0019228">
    <property type="term" value="P:neuronal action potential"/>
    <property type="evidence" value="ECO:0000316"/>
    <property type="project" value="MGI"/>
</dbReference>
<dbReference type="GO" id="GO:0051971">
    <property type="term" value="P:positive regulation of transmission of nerve impulse"/>
    <property type="evidence" value="ECO:0000315"/>
    <property type="project" value="CACAO"/>
</dbReference>
<dbReference type="GO" id="GO:0042391">
    <property type="term" value="P:regulation of membrane potential"/>
    <property type="evidence" value="ECO:0000316"/>
    <property type="project" value="MGI"/>
</dbReference>
<dbReference type="GO" id="GO:0006940">
    <property type="term" value="P:regulation of smooth muscle contraction"/>
    <property type="evidence" value="ECO:0000315"/>
    <property type="project" value="MGI"/>
</dbReference>
<dbReference type="GO" id="GO:0035094">
    <property type="term" value="P:response to nicotine"/>
    <property type="evidence" value="ECO:0000316"/>
    <property type="project" value="MGI"/>
</dbReference>
<dbReference type="GO" id="GO:0006939">
    <property type="term" value="P:smooth muscle contraction"/>
    <property type="evidence" value="ECO:0000316"/>
    <property type="project" value="MGI"/>
</dbReference>
<dbReference type="GO" id="GO:0060084">
    <property type="term" value="P:synaptic transmission involved in micturition"/>
    <property type="evidence" value="ECO:0000315"/>
    <property type="project" value="MGI"/>
</dbReference>
<dbReference type="CDD" id="cd19064">
    <property type="entry name" value="LGIC_TM_nAChR"/>
    <property type="match status" value="1"/>
</dbReference>
<dbReference type="FunFam" id="2.70.170.10:FF:000006">
    <property type="entry name" value="Cholinergic receptor nicotinic beta 2 subunit"/>
    <property type="match status" value="1"/>
</dbReference>
<dbReference type="FunFam" id="1.20.58.390:FF:000008">
    <property type="entry name" value="Cholinergic receptor nicotinic beta 4 subunit"/>
    <property type="match status" value="1"/>
</dbReference>
<dbReference type="FunFam" id="1.20.58.390:FF:000034">
    <property type="entry name" value="Cholinergic receptor nicotinic beta 4 subunit"/>
    <property type="match status" value="1"/>
</dbReference>
<dbReference type="Gene3D" id="2.70.170.10">
    <property type="entry name" value="Neurotransmitter-gated ion-channel ligand-binding domain"/>
    <property type="match status" value="1"/>
</dbReference>
<dbReference type="Gene3D" id="1.20.58.390">
    <property type="entry name" value="Neurotransmitter-gated ion-channel transmembrane domain"/>
    <property type="match status" value="2"/>
</dbReference>
<dbReference type="InterPro" id="IPR006202">
    <property type="entry name" value="Neur_chan_lig-bd"/>
</dbReference>
<dbReference type="InterPro" id="IPR036734">
    <property type="entry name" value="Neur_chan_lig-bd_sf"/>
</dbReference>
<dbReference type="InterPro" id="IPR006201">
    <property type="entry name" value="Neur_channel"/>
</dbReference>
<dbReference type="InterPro" id="IPR036719">
    <property type="entry name" value="Neuro-gated_channel_TM_sf"/>
</dbReference>
<dbReference type="InterPro" id="IPR038050">
    <property type="entry name" value="Neuro_actylchol_rec"/>
</dbReference>
<dbReference type="InterPro" id="IPR006029">
    <property type="entry name" value="Neurotrans-gated_channel_TM"/>
</dbReference>
<dbReference type="InterPro" id="IPR018000">
    <property type="entry name" value="Neurotransmitter_ion_chnl_CS"/>
</dbReference>
<dbReference type="InterPro" id="IPR002394">
    <property type="entry name" value="Nicotinic_acetylcholine_rcpt"/>
</dbReference>
<dbReference type="NCBIfam" id="TIGR00860">
    <property type="entry name" value="LIC"/>
    <property type="match status" value="1"/>
</dbReference>
<dbReference type="PANTHER" id="PTHR18945">
    <property type="entry name" value="NEUROTRANSMITTER GATED ION CHANNEL"/>
    <property type="match status" value="1"/>
</dbReference>
<dbReference type="Pfam" id="PF02931">
    <property type="entry name" value="Neur_chan_LBD"/>
    <property type="match status" value="1"/>
</dbReference>
<dbReference type="Pfam" id="PF02932">
    <property type="entry name" value="Neur_chan_memb"/>
    <property type="match status" value="1"/>
</dbReference>
<dbReference type="PRINTS" id="PR00254">
    <property type="entry name" value="NICOTINICR"/>
</dbReference>
<dbReference type="PRINTS" id="PR00252">
    <property type="entry name" value="NRIONCHANNEL"/>
</dbReference>
<dbReference type="SUPFAM" id="SSF90112">
    <property type="entry name" value="Neurotransmitter-gated ion-channel transmembrane pore"/>
    <property type="match status" value="1"/>
</dbReference>
<dbReference type="SUPFAM" id="SSF63712">
    <property type="entry name" value="Nicotinic receptor ligand binding domain-like"/>
    <property type="match status" value="1"/>
</dbReference>
<dbReference type="PROSITE" id="PS00236">
    <property type="entry name" value="NEUROTR_ION_CHANNEL"/>
    <property type="match status" value="1"/>
</dbReference>
<gene>
    <name type="primary">Chrnb4</name>
    <name type="synonym">Acrb4</name>
</gene>
<protein>
    <recommendedName>
        <fullName>Neuronal acetylcholine receptor subunit beta-4</fullName>
    </recommendedName>
</protein>
<proteinExistence type="evidence at protein level"/>
<reference key="1">
    <citation type="submission" date="2002-03" db="EMBL/GenBank/DDBJ databases">
        <title>Cloning of a mouse nicotinic acetylcholine receptor beta 4 subunit cDNA.</title>
        <authorList>
            <person name="Lautner M.A."/>
            <person name="Remias J."/>
            <person name="Curtis C."/>
            <person name="Bhandarkar S."/>
            <person name="Stitzel J.A."/>
        </authorList>
    </citation>
    <scope>NUCLEOTIDE SEQUENCE [MRNA]</scope>
    <source>
        <strain>C3H/HeJ</strain>
    </source>
</reference>
<reference key="2">
    <citation type="submission" date="2004-03" db="EMBL/GenBank/DDBJ databases">
        <authorList>
            <person name="Groot Kormelink P.J."/>
        </authorList>
    </citation>
    <scope>NUCLEOTIDE SEQUENCE [MRNA]</scope>
    <source>
        <strain>BALB/cJ</strain>
        <tissue>Brain</tissue>
    </source>
</reference>
<reference key="3">
    <citation type="journal article" date="2002" name="J. Neuroimmunol.">
        <title>Differential expression of nicotinic acetylcholine receptor subunits in fetal and neonatal mouse thymus.</title>
        <authorList>
            <person name="Kuo Y.-P."/>
            <person name="Lucero L."/>
            <person name="Michaels J."/>
            <person name="DeLuca D."/>
            <person name="Lukas R.L."/>
        </authorList>
    </citation>
    <scope>NUCLEOTIDE SEQUENCE [MRNA] OF 120-395</scope>
    <scope>TISSUE SPECIFICITY</scope>
    <source>
        <strain>C57BL/6J</strain>
        <tissue>Thymus</tissue>
    </source>
</reference>
<reference key="4">
    <citation type="journal article" date="2011" name="Neuron">
        <title>Aversion to nicotine is regulated by the balanced activity of beta4 and alpha5 nicotinic receptor subunits in the medial habenula.</title>
        <authorList>
            <person name="Frahm S."/>
            <person name="Slimak M.A."/>
            <person name="Ferrarese L."/>
            <person name="Santos-Torres J."/>
            <person name="Antolin-Fontes B."/>
            <person name="Auer S."/>
            <person name="Filkin S."/>
            <person name="Pons S."/>
            <person name="Fontaine J.F."/>
            <person name="Tsetlin V."/>
            <person name="Maskos U."/>
            <person name="Ibanez-Tallon I."/>
        </authorList>
    </citation>
    <scope>FUNCTION</scope>
    <scope>SUBUNIT</scope>
    <scope>ACTIVITY REGULATION</scope>
    <scope>MUTAGENESIS OF SER-435</scope>
</reference>
<comment type="function">
    <text evidence="4 6 9">Component of neuronal acetylcholine receptors (nAChRs) that function as pentameric, ligand-gated cation channels with high calcium permeability among other activities. nAChRs are excitatory neurotrasnmitter receptors formed by a collection of nAChR subunits known to mediate synaptic transmission in the nervous system and the neuromuscular junction. Each nAchR subunit confers differential attributes to channel properties, including activation, deactivation and desensitization kinetics, pH sensitivity, cation permeability, and binding to allosteric modulators (PubMed:21555077). CHRNB4 forms heteropentameric neuronal acetylcholine receptors with CHRNA2, CHRNA3 and CHRNA4, as well as CHRNA5 and CHRNB3 as accesory subunits (PubMed:21555077). CHRNA3:CHRNB4 being predominant in neurons of the autonomic ganglia, it is known as ganglionic nicotinic receptor (By similarity). CHRNA3:CHRNB4 or CHRNA3:CHRNA5:CHRNB4 play also an important role in the habenulo-interpeduncular tract, modulating the mesolimbic dopamine system and affecting reward circuits and addiction (By similarity). Hypothalamic CHRNA3:CHRNB4 nAChR activation by nicotine leads to activation of POMC neurons and a decrease in food intake (By similarity).</text>
</comment>
<comment type="catalytic activity">
    <reaction evidence="3">
        <text>K(+)(in) = K(+)(out)</text>
        <dbReference type="Rhea" id="RHEA:29463"/>
        <dbReference type="ChEBI" id="CHEBI:29103"/>
    </reaction>
</comment>
<comment type="catalytic activity">
    <reaction evidence="5">
        <text>Na(+)(in) = Na(+)(out)</text>
        <dbReference type="Rhea" id="RHEA:34963"/>
        <dbReference type="ChEBI" id="CHEBI:29101"/>
    </reaction>
</comment>
<comment type="catalytic activity">
    <reaction evidence="6">
        <text>Ca(2+)(in) = Ca(2+)(out)</text>
        <dbReference type="Rhea" id="RHEA:29671"/>
        <dbReference type="ChEBI" id="CHEBI:29108"/>
    </reaction>
</comment>
<comment type="activity regulation">
    <text evidence="6">Activated by a myriad of ligands such as acetylcholine, cytisine, nicotine, choline and epibatidine. The heteropentamer CHRNA3:CHRNB4 activity is blocked by the alpha-conotoxin ImI and AuIB.</text>
</comment>
<comment type="subunit">
    <text evidence="6 9">Neuronal AChR is composed of two different types of subunits: alpha and beta. CHRNB4/Beta-4 subunit can be combined to CHRNA2/alpha-2, CHRNA3/alpha-3 or CHRNA4/alpha-4, CHRNA5/alpha-5 and CHRNB3/beta-3 to give rise to functional receptors (PubMed:21555077). Forms stoichiometries such as (CHRNA3)2:(CHRNB4)3 or (CHRNA3:CHRNB4)2:CHRNB3. Interacts with RIC3; which is required for proper folding and assembly. Interacts with LYPD6 (By similarity).</text>
</comment>
<comment type="subcellular location">
    <subcellularLocation>
        <location evidence="2">Synaptic cell membrane</location>
        <topology evidence="7">Multi-pass membrane protein</topology>
    </subcellularLocation>
    <subcellularLocation>
        <location evidence="2">Cell membrane</location>
        <topology evidence="7">Multi-pass membrane protein</topology>
    </subcellularLocation>
</comment>
<comment type="tissue specificity">
    <text evidence="8">Predominantly expressed by immature T-cells in the thymus.</text>
</comment>
<comment type="similarity">
    <text evidence="10">Belongs to the ligand-gated ion channel (TC 1.A.9) family. Acetylcholine receptor (TC 1.A.9.1) subfamily. Beta-4/CHRNB4 sub-subfamily.</text>
</comment>
<sequence>MRGTPLLLVSLFALLQPGDCRLANAEEKLMDDLLNKTRYNNLIRPATSSSQLISIRLELSLSQLISVNEREQIMTTSIWLKQEWTDYRLAWNSSCYEGVNILRIPAKRVWLPDIVLYNNADGTYEVSVYTNVIVRSNGSIQWLPPAIYKSACKIEVKHFPFDQQNCTLKFRSWTYDHTEIDMVLKSPTAIMDDFTPSGEWDIVALPGRRTVNPQDPSYVDVTYDFIIKRKPLFYTINLIIPCVLITSLAILVFYLPSDCGEKMTLCISVLLALTFFLLLISKIVPPTSLDIPLIGKYLLFTMVLVTFSIVTTVCVLNVHHRSPSTHTMASWVKECFLHKLPTFLFMKRPGLEVSPARVPHSSQLHLTTAEATSTSALGPSSPSNLYGNSMYFVNPVPATPKSAVSSHTAGLPRDARLRSSGRFRQDLQEALEGVSFIAQHLESDDRDQSVIEDWKFVAMVVDRLFLWVFVIVCILGTMGLFLPPLFQIHAPSKGL</sequence>